<accession>Q3TYQ9</accession>
<accession>Q8VI17</accession>
<proteinExistence type="evidence at protein level"/>
<feature type="chain" id="PRO_0000425250" description="Aldehyde oxidase 4">
    <location>
        <begin position="1"/>
        <end position="1336"/>
    </location>
</feature>
<feature type="domain" description="2Fe-2S ferredoxin-type" evidence="5">
    <location>
        <begin position="8"/>
        <end position="95"/>
    </location>
</feature>
<feature type="domain" description="FAD-binding PCMH-type" evidence="6">
    <location>
        <begin position="237"/>
        <end position="423"/>
    </location>
</feature>
<feature type="active site" description="Proton acceptor; for azaheterocycle hydroxylase activity" evidence="3">
    <location>
        <position position="1267"/>
    </location>
</feature>
<feature type="binding site" evidence="4">
    <location>
        <position position="47"/>
    </location>
    <ligand>
        <name>[2Fe-2S] cluster</name>
        <dbReference type="ChEBI" id="CHEBI:190135"/>
        <label>1</label>
    </ligand>
</feature>
<feature type="binding site" evidence="4">
    <location>
        <position position="52"/>
    </location>
    <ligand>
        <name>[2Fe-2S] cluster</name>
        <dbReference type="ChEBI" id="CHEBI:190135"/>
        <label>1</label>
    </ligand>
</feature>
<feature type="binding site" evidence="4">
    <location>
        <position position="55"/>
    </location>
    <ligand>
        <name>[2Fe-2S] cluster</name>
        <dbReference type="ChEBI" id="CHEBI:190135"/>
        <label>1</label>
    </ligand>
</feature>
<feature type="binding site" evidence="4">
    <location>
        <position position="77"/>
    </location>
    <ligand>
        <name>[2Fe-2S] cluster</name>
        <dbReference type="ChEBI" id="CHEBI:190135"/>
        <label>1</label>
    </ligand>
</feature>
<feature type="binding site" evidence="4">
    <location>
        <position position="116"/>
    </location>
    <ligand>
        <name>Mo-molybdopterin</name>
        <dbReference type="ChEBI" id="CHEBI:71302"/>
    </ligand>
</feature>
<feature type="binding site" evidence="4">
    <location>
        <position position="117"/>
    </location>
    <ligand>
        <name>[2Fe-2S] cluster</name>
        <dbReference type="ChEBI" id="CHEBI:190135"/>
        <label>2</label>
    </ligand>
</feature>
<feature type="binding site" evidence="4">
    <location>
        <position position="120"/>
    </location>
    <ligand>
        <name>[2Fe-2S] cluster</name>
        <dbReference type="ChEBI" id="CHEBI:190135"/>
        <label>2</label>
    </ligand>
</feature>
<feature type="binding site" evidence="4">
    <location>
        <position position="152"/>
    </location>
    <ligand>
        <name>[2Fe-2S] cluster</name>
        <dbReference type="ChEBI" id="CHEBI:190135"/>
        <label>2</label>
    </ligand>
</feature>
<feature type="binding site" evidence="4">
    <location>
        <position position="154"/>
    </location>
    <ligand>
        <name>[2Fe-2S] cluster</name>
        <dbReference type="ChEBI" id="CHEBI:190135"/>
        <label>2</label>
    </ligand>
</feature>
<feature type="binding site" evidence="4">
    <location>
        <position position="154"/>
    </location>
    <ligand>
        <name>Mo-molybdopterin</name>
        <dbReference type="ChEBI" id="CHEBI:71302"/>
    </ligand>
</feature>
<feature type="binding site" evidence="4">
    <location>
        <begin position="265"/>
        <end position="272"/>
    </location>
    <ligand>
        <name>FAD</name>
        <dbReference type="ChEBI" id="CHEBI:57692"/>
    </ligand>
</feature>
<feature type="binding site" evidence="4">
    <location>
        <position position="346"/>
    </location>
    <ligand>
        <name>FAD</name>
        <dbReference type="ChEBI" id="CHEBI:57692"/>
    </ligand>
</feature>
<feature type="binding site" evidence="1">
    <location>
        <position position="355"/>
    </location>
    <ligand>
        <name>FAD</name>
        <dbReference type="ChEBI" id="CHEBI:57692"/>
    </ligand>
</feature>
<feature type="binding site" evidence="4">
    <location>
        <position position="359"/>
    </location>
    <ligand>
        <name>FAD</name>
        <dbReference type="ChEBI" id="CHEBI:57692"/>
    </ligand>
</feature>
<feature type="binding site" evidence="4">
    <location>
        <position position="368"/>
    </location>
    <ligand>
        <name>FAD</name>
        <dbReference type="ChEBI" id="CHEBI:57692"/>
    </ligand>
</feature>
<feature type="binding site" evidence="1">
    <location>
        <position position="413"/>
    </location>
    <ligand>
        <name>FAD</name>
        <dbReference type="ChEBI" id="CHEBI:57692"/>
    </ligand>
</feature>
<feature type="binding site" evidence="4">
    <location>
        <begin position="804"/>
        <end position="805"/>
    </location>
    <ligand>
        <name>Mo-molybdopterin</name>
        <dbReference type="ChEBI" id="CHEBI:71302"/>
    </ligand>
</feature>
<feature type="binding site" evidence="1">
    <location>
        <position position="1045"/>
    </location>
    <ligand>
        <name>Mo-molybdopterin</name>
        <dbReference type="ChEBI" id="CHEBI:71302"/>
    </ligand>
</feature>
<feature type="binding site" evidence="4">
    <location>
        <begin position="1086"/>
        <end position="1089"/>
    </location>
    <ligand>
        <name>Mo-molybdopterin</name>
        <dbReference type="ChEBI" id="CHEBI:71302"/>
    </ligand>
</feature>
<feature type="binding site" evidence="4">
    <location>
        <position position="1201"/>
    </location>
    <ligand>
        <name>Mo-molybdopterin</name>
        <dbReference type="ChEBI" id="CHEBI:71302"/>
    </ligand>
</feature>
<feature type="binding site" evidence="4">
    <location>
        <position position="1265"/>
    </location>
    <ligand>
        <name>Mo-molybdopterin</name>
        <dbReference type="ChEBI" id="CHEBI:71302"/>
    </ligand>
</feature>
<feature type="sequence conflict" description="In Ref. 1; AAL38126." evidence="9" ref="1">
    <location>
        <position position="386"/>
    </location>
</feature>
<evidence type="ECO:0000250" key="1"/>
<evidence type="ECO:0000250" key="2">
    <source>
        <dbReference type="UniProtKB" id="G3X982"/>
    </source>
</evidence>
<evidence type="ECO:0000250" key="3">
    <source>
        <dbReference type="UniProtKB" id="O54754"/>
    </source>
</evidence>
<evidence type="ECO:0000250" key="4">
    <source>
        <dbReference type="UniProtKB" id="Q06278"/>
    </source>
</evidence>
<evidence type="ECO:0000255" key="5">
    <source>
        <dbReference type="PROSITE-ProRule" id="PRU00465"/>
    </source>
</evidence>
<evidence type="ECO:0000255" key="6">
    <source>
        <dbReference type="PROSITE-ProRule" id="PRU00718"/>
    </source>
</evidence>
<evidence type="ECO:0000269" key="7">
    <source>
    </source>
</evidence>
<evidence type="ECO:0000269" key="8">
    <source>
    </source>
</evidence>
<evidence type="ECO:0000305" key="9"/>
<evidence type="ECO:0000305" key="10">
    <source>
    </source>
</evidence>
<evidence type="ECO:0000305" key="11">
    <source>
    </source>
</evidence>
<sequence length="1336" mass="148279">MPSVSESDELIFFVNGKKVIEKNPDPEKNLLFYTRKVLNLTGTKYSCGTGGCGACTVMVSRYNPKTRKIHHYPATACLVPICWLHGAAITTVEGVGSIKKRVHPVQERLAKCHGTQCGFCSPGMVMSIYTLLRNHPEPTPDQITEALGGNLCRCTGYRPIVESGKTFSQKSTVCQMKGSGKCCMDPDEKCLESREKKMCTKLYNEDEFQPFDPSQEPIFPPELIRMAEDPNKRRLTFQGKRTTWIIPVTLNDLLELKASYPEAPLVMGNTTVGPGIKFNDEFYPVFISPLGVPELNLMDTTNNGVTIGAGYSLAQLKDTLDFLVSEQPKEKTKTFHALQKHLRTLAGPQIRNMATLGGHTASRPNFSDLNPILAAGNATINVVSREGKDRQLPLNGPFLEKLPEADLKPEEVILSIFIPYTAQWQFVSGLRLAQRQENAFAIVNAGMSVEFEEGTNTIKDLKMFFGSVAPTVVSASQTCKQLIGRQWDDQMLSDACQLVLQEIRIPPDAEGGMVEYRRTLIISLLFKFYLKVQRWLNEMDPQKFPDIPGKFVSALDDFPIETPQGIQMFQCVDPKQPQKDPVGHPIMHQSGIKHATGEAIFIDDMPPIDQELCLAVVTSTRAHAKITSLDVSEALACPGVVDVITAEDVPGENDHNGEILYAQSEVICVGQIICTVAADTYIHAKEAAKRVKIAYDDIEPTIITIEEALEHNSFLSPEKKIEQGNVDYAFKHVDQIVEGEIHVEGQEHFYMETQTILAIPQTEDKEMVLHLGTQFPTHVQEFVSAALNVPRSRIACHMKRAGGAFGGKVTKPALLGAVCAVAANKTGRPIRFILERSDDMLITAGRHPLLGKYKIGFMNNGEIRAADVEYYTNGGCTPDESELVIEFVVLKSENTYHIPNFRCRGRACKTNLPSNTAFRGFGFPQATVVVEAYIAAVASKCNLLPEEVREINMYKKTSKTAYKQTFNPEPLRRCWKECLEKSSFFARKKAAEEFNGNNYWKKRGLAVVPMKFSVAVPIAFYNQAAALVHIFLDGSVLLTHGGCELGQGLHTKMIQVASRELNVPKSYVHFSETSTTTVPNSAFTAGSMGADINGKAVQNACQILMDRLRPIIRKNPKGKWEEWIKMAFEESISLSATGYFKGYQTNMDWKKEEGDPYPYYVYGAACSEVEVDCLTGAHKLLRTDIFVDAAFSINPALDIGQVEGAFIQGMGFYTTEELKYSPKGVLYSRGPEDYKIPTITEIPEEFYVTLVHSRNPIAIYSSKGLGEAGMFLGSSVLFAIYDAVTTARKERGLSDIFPLNSPATPEVIRMACTDQFTEMIPRDDPSTFTPWSIHVS</sequence>
<dbReference type="EC" id="1.2.3.1" evidence="7"/>
<dbReference type="EC" id="1.17.3.-"/>
<dbReference type="EMBL" id="AF321814">
    <property type="protein sequence ID" value="AAL38126.1"/>
    <property type="molecule type" value="Genomic_DNA"/>
</dbReference>
<dbReference type="EMBL" id="AF321780">
    <property type="protein sequence ID" value="AAL38126.1"/>
    <property type="status" value="JOINED"/>
    <property type="molecule type" value="Genomic_DNA"/>
</dbReference>
<dbReference type="EMBL" id="AF321781">
    <property type="protein sequence ID" value="AAL38126.1"/>
    <property type="status" value="JOINED"/>
    <property type="molecule type" value="Genomic_DNA"/>
</dbReference>
<dbReference type="EMBL" id="AF321782">
    <property type="protein sequence ID" value="AAL38126.1"/>
    <property type="status" value="JOINED"/>
    <property type="molecule type" value="Genomic_DNA"/>
</dbReference>
<dbReference type="EMBL" id="AF321783">
    <property type="protein sequence ID" value="AAL38126.1"/>
    <property type="status" value="JOINED"/>
    <property type="molecule type" value="Genomic_DNA"/>
</dbReference>
<dbReference type="EMBL" id="AF321784">
    <property type="protein sequence ID" value="AAL38126.1"/>
    <property type="status" value="JOINED"/>
    <property type="molecule type" value="Genomic_DNA"/>
</dbReference>
<dbReference type="EMBL" id="AF321785">
    <property type="protein sequence ID" value="AAL38126.1"/>
    <property type="status" value="JOINED"/>
    <property type="molecule type" value="Genomic_DNA"/>
</dbReference>
<dbReference type="EMBL" id="AF321786">
    <property type="protein sequence ID" value="AAL38126.1"/>
    <property type="status" value="JOINED"/>
    <property type="molecule type" value="Genomic_DNA"/>
</dbReference>
<dbReference type="EMBL" id="AF321787">
    <property type="protein sequence ID" value="AAL38126.1"/>
    <property type="status" value="JOINED"/>
    <property type="molecule type" value="Genomic_DNA"/>
</dbReference>
<dbReference type="EMBL" id="AF321788">
    <property type="protein sequence ID" value="AAL38126.1"/>
    <property type="status" value="JOINED"/>
    <property type="molecule type" value="Genomic_DNA"/>
</dbReference>
<dbReference type="EMBL" id="AF321789">
    <property type="protein sequence ID" value="AAL38126.1"/>
    <property type="status" value="JOINED"/>
    <property type="molecule type" value="Genomic_DNA"/>
</dbReference>
<dbReference type="EMBL" id="AF321790">
    <property type="protein sequence ID" value="AAL38126.1"/>
    <property type="status" value="JOINED"/>
    <property type="molecule type" value="Genomic_DNA"/>
</dbReference>
<dbReference type="EMBL" id="AF321791">
    <property type="protein sequence ID" value="AAL38126.1"/>
    <property type="status" value="JOINED"/>
    <property type="molecule type" value="Genomic_DNA"/>
</dbReference>
<dbReference type="EMBL" id="AF321792">
    <property type="protein sequence ID" value="AAL38126.1"/>
    <property type="status" value="JOINED"/>
    <property type="molecule type" value="Genomic_DNA"/>
</dbReference>
<dbReference type="EMBL" id="AF321793">
    <property type="protein sequence ID" value="AAL38126.1"/>
    <property type="status" value="JOINED"/>
    <property type="molecule type" value="Genomic_DNA"/>
</dbReference>
<dbReference type="EMBL" id="AF321794">
    <property type="protein sequence ID" value="AAL38126.1"/>
    <property type="status" value="JOINED"/>
    <property type="molecule type" value="Genomic_DNA"/>
</dbReference>
<dbReference type="EMBL" id="AF321795">
    <property type="protein sequence ID" value="AAL38126.1"/>
    <property type="status" value="JOINED"/>
    <property type="molecule type" value="Genomic_DNA"/>
</dbReference>
<dbReference type="EMBL" id="AF321796">
    <property type="protein sequence ID" value="AAL38126.1"/>
    <property type="status" value="JOINED"/>
    <property type="molecule type" value="Genomic_DNA"/>
</dbReference>
<dbReference type="EMBL" id="AF321797">
    <property type="protein sequence ID" value="AAL38126.1"/>
    <property type="status" value="JOINED"/>
    <property type="molecule type" value="Genomic_DNA"/>
</dbReference>
<dbReference type="EMBL" id="AF321798">
    <property type="protein sequence ID" value="AAL38126.1"/>
    <property type="status" value="JOINED"/>
    <property type="molecule type" value="Genomic_DNA"/>
</dbReference>
<dbReference type="EMBL" id="AF321799">
    <property type="protein sequence ID" value="AAL38126.1"/>
    <property type="status" value="JOINED"/>
    <property type="molecule type" value="Genomic_DNA"/>
</dbReference>
<dbReference type="EMBL" id="AF321800">
    <property type="protein sequence ID" value="AAL38126.1"/>
    <property type="status" value="JOINED"/>
    <property type="molecule type" value="Genomic_DNA"/>
</dbReference>
<dbReference type="EMBL" id="AF321801">
    <property type="protein sequence ID" value="AAL38126.1"/>
    <property type="status" value="JOINED"/>
    <property type="molecule type" value="Genomic_DNA"/>
</dbReference>
<dbReference type="EMBL" id="AF321802">
    <property type="protein sequence ID" value="AAL38126.1"/>
    <property type="status" value="JOINED"/>
    <property type="molecule type" value="Genomic_DNA"/>
</dbReference>
<dbReference type="EMBL" id="AF321803">
    <property type="protein sequence ID" value="AAL38126.1"/>
    <property type="status" value="JOINED"/>
    <property type="molecule type" value="Genomic_DNA"/>
</dbReference>
<dbReference type="EMBL" id="AF321804">
    <property type="protein sequence ID" value="AAL38126.1"/>
    <property type="status" value="JOINED"/>
    <property type="molecule type" value="Genomic_DNA"/>
</dbReference>
<dbReference type="EMBL" id="AF321805">
    <property type="protein sequence ID" value="AAL38126.1"/>
    <property type="status" value="JOINED"/>
    <property type="molecule type" value="Genomic_DNA"/>
</dbReference>
<dbReference type="EMBL" id="AF321806">
    <property type="protein sequence ID" value="AAL38126.1"/>
    <property type="status" value="JOINED"/>
    <property type="molecule type" value="Genomic_DNA"/>
</dbReference>
<dbReference type="EMBL" id="AF321807">
    <property type="protein sequence ID" value="AAL38126.1"/>
    <property type="status" value="JOINED"/>
    <property type="molecule type" value="Genomic_DNA"/>
</dbReference>
<dbReference type="EMBL" id="AF321808">
    <property type="protein sequence ID" value="AAL38126.1"/>
    <property type="status" value="JOINED"/>
    <property type="molecule type" value="Genomic_DNA"/>
</dbReference>
<dbReference type="EMBL" id="AF321809">
    <property type="protein sequence ID" value="AAL38126.1"/>
    <property type="status" value="JOINED"/>
    <property type="molecule type" value="Genomic_DNA"/>
</dbReference>
<dbReference type="EMBL" id="AF321810">
    <property type="protein sequence ID" value="AAL38126.1"/>
    <property type="status" value="JOINED"/>
    <property type="molecule type" value="Genomic_DNA"/>
</dbReference>
<dbReference type="EMBL" id="AF321811">
    <property type="protein sequence ID" value="AAL38126.1"/>
    <property type="status" value="JOINED"/>
    <property type="molecule type" value="Genomic_DNA"/>
</dbReference>
<dbReference type="EMBL" id="AF321812">
    <property type="protein sequence ID" value="AAL38126.1"/>
    <property type="status" value="JOINED"/>
    <property type="molecule type" value="Genomic_DNA"/>
</dbReference>
<dbReference type="EMBL" id="AF321813">
    <property type="protein sequence ID" value="AAL38126.1"/>
    <property type="status" value="JOINED"/>
    <property type="molecule type" value="Genomic_DNA"/>
</dbReference>
<dbReference type="EMBL" id="AK158427">
    <property type="protein sequence ID" value="BAE34503.1"/>
    <property type="molecule type" value="mRNA"/>
</dbReference>
<dbReference type="EMBL" id="AC025116">
    <property type="status" value="NOT_ANNOTATED_CDS"/>
    <property type="molecule type" value="Genomic_DNA"/>
</dbReference>
<dbReference type="EMBL" id="BC117975">
    <property type="protein sequence ID" value="AAI17976.1"/>
    <property type="molecule type" value="mRNA"/>
</dbReference>
<dbReference type="CCDS" id="CCDS14970.1"/>
<dbReference type="RefSeq" id="NP_076120.2">
    <property type="nucleotide sequence ID" value="NM_023631.2"/>
</dbReference>
<dbReference type="SMR" id="Q3TYQ9"/>
<dbReference type="FunCoup" id="Q3TYQ9">
    <property type="interactions" value="435"/>
</dbReference>
<dbReference type="STRING" id="10090.ENSMUSP00000048929"/>
<dbReference type="GlyGen" id="Q3TYQ9">
    <property type="glycosylation" value="2 sites"/>
</dbReference>
<dbReference type="iPTMnet" id="Q3TYQ9"/>
<dbReference type="PhosphoSitePlus" id="Q3TYQ9"/>
<dbReference type="jPOST" id="Q3TYQ9"/>
<dbReference type="PaxDb" id="10090-ENSMUSP00000048929"/>
<dbReference type="ProteomicsDB" id="281781"/>
<dbReference type="DNASU" id="71872"/>
<dbReference type="Ensembl" id="ENSMUST00000040442.6">
    <property type="protein sequence ID" value="ENSMUSP00000048929.6"/>
    <property type="gene ID" value="ENSMUSG00000038242.13"/>
</dbReference>
<dbReference type="GeneID" id="71872"/>
<dbReference type="KEGG" id="mmu:71872"/>
<dbReference type="UCSC" id="uc007bbo.1">
    <property type="organism name" value="mouse"/>
</dbReference>
<dbReference type="AGR" id="MGI:1919122"/>
<dbReference type="CTD" id="71872"/>
<dbReference type="MGI" id="MGI:1919122">
    <property type="gene designation" value="Aox4"/>
</dbReference>
<dbReference type="VEuPathDB" id="HostDB:ENSMUSG00000038242"/>
<dbReference type="eggNOG" id="KOG0430">
    <property type="taxonomic scope" value="Eukaryota"/>
</dbReference>
<dbReference type="GeneTree" id="ENSGT00950000183114"/>
<dbReference type="HOGENOM" id="CLU_001681_1_2_1"/>
<dbReference type="InParanoid" id="Q3TYQ9"/>
<dbReference type="OMA" id="AQSEVIC"/>
<dbReference type="OrthoDB" id="8300278at2759"/>
<dbReference type="PhylomeDB" id="Q3TYQ9"/>
<dbReference type="TreeFam" id="TF353036"/>
<dbReference type="BioGRID-ORCS" id="71872">
    <property type="hits" value="5 hits in 76 CRISPR screens"/>
</dbReference>
<dbReference type="ChiTaRS" id="Aox4">
    <property type="organism name" value="mouse"/>
</dbReference>
<dbReference type="PRO" id="PR:Q3TYQ9"/>
<dbReference type="Proteomes" id="UP000000589">
    <property type="component" value="Chromosome 1"/>
</dbReference>
<dbReference type="RNAct" id="Q3TYQ9">
    <property type="molecule type" value="protein"/>
</dbReference>
<dbReference type="Bgee" id="ENSMUSG00000038242">
    <property type="expression patterns" value="Expressed in tail skin and 61 other cell types or tissues"/>
</dbReference>
<dbReference type="GO" id="GO:0005829">
    <property type="term" value="C:cytosol"/>
    <property type="evidence" value="ECO:0000250"/>
    <property type="project" value="UniProtKB"/>
</dbReference>
<dbReference type="GO" id="GO:0051537">
    <property type="term" value="F:2 iron, 2 sulfur cluster binding"/>
    <property type="evidence" value="ECO:0000250"/>
    <property type="project" value="UniProtKB"/>
</dbReference>
<dbReference type="GO" id="GO:0004031">
    <property type="term" value="F:aldehyde oxidase activity"/>
    <property type="evidence" value="ECO:0000250"/>
    <property type="project" value="UniProtKB"/>
</dbReference>
<dbReference type="GO" id="GO:0009055">
    <property type="term" value="F:electron transfer activity"/>
    <property type="evidence" value="ECO:0000247"/>
    <property type="project" value="MGI"/>
</dbReference>
<dbReference type="GO" id="GO:0071949">
    <property type="term" value="F:FAD binding"/>
    <property type="evidence" value="ECO:0007669"/>
    <property type="project" value="InterPro"/>
</dbReference>
<dbReference type="GO" id="GO:0050660">
    <property type="term" value="F:flavin adenine dinucleotide binding"/>
    <property type="evidence" value="ECO:0000250"/>
    <property type="project" value="UniProtKB"/>
</dbReference>
<dbReference type="GO" id="GO:0005506">
    <property type="term" value="F:iron ion binding"/>
    <property type="evidence" value="ECO:0000250"/>
    <property type="project" value="UniProtKB"/>
</dbReference>
<dbReference type="GO" id="GO:0030151">
    <property type="term" value="F:molybdenum ion binding"/>
    <property type="evidence" value="ECO:0000247"/>
    <property type="project" value="MGI"/>
</dbReference>
<dbReference type="GO" id="GO:0043546">
    <property type="term" value="F:molybdopterin cofactor binding"/>
    <property type="evidence" value="ECO:0000250"/>
    <property type="project" value="UniProtKB"/>
</dbReference>
<dbReference type="GO" id="GO:0051287">
    <property type="term" value="F:NAD binding"/>
    <property type="evidence" value="ECO:0007669"/>
    <property type="project" value="InterPro"/>
</dbReference>
<dbReference type="GO" id="GO:0042803">
    <property type="term" value="F:protein homodimerization activity"/>
    <property type="evidence" value="ECO:0000250"/>
    <property type="project" value="UniProtKB"/>
</dbReference>
<dbReference type="GO" id="GO:0006805">
    <property type="term" value="P:xenobiotic metabolic process"/>
    <property type="evidence" value="ECO:0000250"/>
    <property type="project" value="UniProtKB"/>
</dbReference>
<dbReference type="CDD" id="cd00207">
    <property type="entry name" value="fer2"/>
    <property type="match status" value="1"/>
</dbReference>
<dbReference type="FunFam" id="1.10.150.120:FF:000001">
    <property type="entry name" value="Aldehyde oxidase 1"/>
    <property type="match status" value="1"/>
</dbReference>
<dbReference type="FunFam" id="3.10.20.30:FF:000015">
    <property type="entry name" value="Aldehyde oxidase 1"/>
    <property type="match status" value="1"/>
</dbReference>
<dbReference type="FunFam" id="3.30.365.10:FF:000003">
    <property type="entry name" value="Aldehyde oxidase 1"/>
    <property type="match status" value="1"/>
</dbReference>
<dbReference type="FunFam" id="3.90.1170.50:FF:000001">
    <property type="entry name" value="Aldehyde oxidase 1"/>
    <property type="match status" value="1"/>
</dbReference>
<dbReference type="FunFam" id="3.30.365.10:FF:000025">
    <property type="entry name" value="Aldehyde oxidase 4"/>
    <property type="match status" value="1"/>
</dbReference>
<dbReference type="FunFam" id="3.30.365.10:FF:000001">
    <property type="entry name" value="Xanthine dehydrogenase oxidase"/>
    <property type="match status" value="1"/>
</dbReference>
<dbReference type="FunFam" id="3.30.365.10:FF:000004">
    <property type="entry name" value="Xanthine dehydrogenase oxidase"/>
    <property type="match status" value="1"/>
</dbReference>
<dbReference type="FunFam" id="3.30.390.50:FF:000001">
    <property type="entry name" value="Xanthine dehydrogenase oxidase"/>
    <property type="match status" value="1"/>
</dbReference>
<dbReference type="FunFam" id="3.30.43.10:FF:000001">
    <property type="entry name" value="Xanthine dehydrogenase/oxidase"/>
    <property type="match status" value="1"/>
</dbReference>
<dbReference type="FunFam" id="3.30.465.10:FF:000004">
    <property type="entry name" value="Xanthine dehydrogenase/oxidase"/>
    <property type="match status" value="1"/>
</dbReference>
<dbReference type="Gene3D" id="3.10.20.30">
    <property type="match status" value="1"/>
</dbReference>
<dbReference type="Gene3D" id="3.30.465.10">
    <property type="match status" value="1"/>
</dbReference>
<dbReference type="Gene3D" id="1.10.150.120">
    <property type="entry name" value="[2Fe-2S]-binding domain"/>
    <property type="match status" value="1"/>
</dbReference>
<dbReference type="Gene3D" id="3.90.1170.50">
    <property type="entry name" value="Aldehyde oxidase/xanthine dehydrogenase, a/b hammerhead"/>
    <property type="match status" value="1"/>
</dbReference>
<dbReference type="Gene3D" id="3.30.365.10">
    <property type="entry name" value="Aldehyde oxidase/xanthine dehydrogenase, molybdopterin binding domain"/>
    <property type="match status" value="5"/>
</dbReference>
<dbReference type="Gene3D" id="3.30.390.50">
    <property type="entry name" value="CO dehydrogenase flavoprotein, C-terminal domain"/>
    <property type="match status" value="1"/>
</dbReference>
<dbReference type="Gene3D" id="3.30.43.10">
    <property type="entry name" value="Uridine Diphospho-n-acetylenolpyruvylglucosamine Reductase, domain 2"/>
    <property type="match status" value="1"/>
</dbReference>
<dbReference type="InterPro" id="IPR002888">
    <property type="entry name" value="2Fe-2S-bd"/>
</dbReference>
<dbReference type="InterPro" id="IPR036884">
    <property type="entry name" value="2Fe-2S-bd_dom_sf"/>
</dbReference>
<dbReference type="InterPro" id="IPR036010">
    <property type="entry name" value="2Fe-2S_ferredoxin-like_sf"/>
</dbReference>
<dbReference type="InterPro" id="IPR001041">
    <property type="entry name" value="2Fe-2S_ferredoxin-type"/>
</dbReference>
<dbReference type="InterPro" id="IPR006058">
    <property type="entry name" value="2Fe2S_fd_BS"/>
</dbReference>
<dbReference type="InterPro" id="IPR000674">
    <property type="entry name" value="Ald_Oxase/Xan_DH_a/b"/>
</dbReference>
<dbReference type="InterPro" id="IPR036856">
    <property type="entry name" value="Ald_Oxase/Xan_DH_a/b_sf"/>
</dbReference>
<dbReference type="InterPro" id="IPR016208">
    <property type="entry name" value="Ald_Oxase/xanthine_DH-like"/>
</dbReference>
<dbReference type="InterPro" id="IPR014313">
    <property type="entry name" value="Aldehyde_oxidase"/>
</dbReference>
<dbReference type="InterPro" id="IPR008274">
    <property type="entry name" value="AldOxase/xan_DH_MoCoBD1"/>
</dbReference>
<dbReference type="InterPro" id="IPR046867">
    <property type="entry name" value="AldOxase/xan_DH_MoCoBD2"/>
</dbReference>
<dbReference type="InterPro" id="IPR037165">
    <property type="entry name" value="AldOxase/xan_DH_Mopterin-bd_sf"/>
</dbReference>
<dbReference type="InterPro" id="IPR012675">
    <property type="entry name" value="Beta-grasp_dom_sf"/>
</dbReference>
<dbReference type="InterPro" id="IPR005107">
    <property type="entry name" value="CO_DH_flav_C"/>
</dbReference>
<dbReference type="InterPro" id="IPR036683">
    <property type="entry name" value="CO_DH_flav_C_dom_sf"/>
</dbReference>
<dbReference type="InterPro" id="IPR016166">
    <property type="entry name" value="FAD-bd_PCMH"/>
</dbReference>
<dbReference type="InterPro" id="IPR036318">
    <property type="entry name" value="FAD-bd_PCMH-like_sf"/>
</dbReference>
<dbReference type="InterPro" id="IPR016167">
    <property type="entry name" value="FAD-bd_PCMH_sub1"/>
</dbReference>
<dbReference type="InterPro" id="IPR016169">
    <property type="entry name" value="FAD-bd_PCMH_sub2"/>
</dbReference>
<dbReference type="InterPro" id="IPR002346">
    <property type="entry name" value="Mopterin_DH_FAD-bd"/>
</dbReference>
<dbReference type="NCBIfam" id="TIGR02969">
    <property type="entry name" value="mam_aldehyde_ox"/>
    <property type="match status" value="1"/>
</dbReference>
<dbReference type="PANTHER" id="PTHR45444">
    <property type="entry name" value="XANTHINE DEHYDROGENASE"/>
    <property type="match status" value="1"/>
</dbReference>
<dbReference type="PANTHER" id="PTHR45444:SF3">
    <property type="entry name" value="XANTHINE DEHYDROGENASE"/>
    <property type="match status" value="1"/>
</dbReference>
<dbReference type="Pfam" id="PF01315">
    <property type="entry name" value="Ald_Xan_dh_C"/>
    <property type="match status" value="1"/>
</dbReference>
<dbReference type="Pfam" id="PF03450">
    <property type="entry name" value="CO_deh_flav_C"/>
    <property type="match status" value="1"/>
</dbReference>
<dbReference type="Pfam" id="PF00941">
    <property type="entry name" value="FAD_binding_5"/>
    <property type="match status" value="1"/>
</dbReference>
<dbReference type="Pfam" id="PF00111">
    <property type="entry name" value="Fer2"/>
    <property type="match status" value="1"/>
</dbReference>
<dbReference type="Pfam" id="PF01799">
    <property type="entry name" value="Fer2_2"/>
    <property type="match status" value="1"/>
</dbReference>
<dbReference type="Pfam" id="PF02738">
    <property type="entry name" value="MoCoBD_1"/>
    <property type="match status" value="1"/>
</dbReference>
<dbReference type="Pfam" id="PF20256">
    <property type="entry name" value="MoCoBD_2"/>
    <property type="match status" value="1"/>
</dbReference>
<dbReference type="PIRSF" id="PIRSF000127">
    <property type="entry name" value="Xanthine_DH"/>
    <property type="match status" value="1"/>
</dbReference>
<dbReference type="SMART" id="SM01008">
    <property type="entry name" value="Ald_Xan_dh_C"/>
    <property type="match status" value="1"/>
</dbReference>
<dbReference type="SMART" id="SM01092">
    <property type="entry name" value="CO_deh_flav_C"/>
    <property type="match status" value="1"/>
</dbReference>
<dbReference type="SUPFAM" id="SSF54292">
    <property type="entry name" value="2Fe-2S ferredoxin-like"/>
    <property type="match status" value="1"/>
</dbReference>
<dbReference type="SUPFAM" id="SSF55447">
    <property type="entry name" value="CO dehydrogenase flavoprotein C-terminal domain-like"/>
    <property type="match status" value="1"/>
</dbReference>
<dbReference type="SUPFAM" id="SSF47741">
    <property type="entry name" value="CO dehydrogenase ISP C-domain like"/>
    <property type="match status" value="1"/>
</dbReference>
<dbReference type="SUPFAM" id="SSF54665">
    <property type="entry name" value="CO dehydrogenase molybdoprotein N-domain-like"/>
    <property type="match status" value="1"/>
</dbReference>
<dbReference type="SUPFAM" id="SSF56176">
    <property type="entry name" value="FAD-binding/transporter-associated domain-like"/>
    <property type="match status" value="1"/>
</dbReference>
<dbReference type="SUPFAM" id="SSF56003">
    <property type="entry name" value="Molybdenum cofactor-binding domain"/>
    <property type="match status" value="1"/>
</dbReference>
<dbReference type="PROSITE" id="PS00197">
    <property type="entry name" value="2FE2S_FER_1"/>
    <property type="match status" value="1"/>
</dbReference>
<dbReference type="PROSITE" id="PS51085">
    <property type="entry name" value="2FE2S_FER_2"/>
    <property type="match status" value="1"/>
</dbReference>
<dbReference type="PROSITE" id="PS51387">
    <property type="entry name" value="FAD_PCMH"/>
    <property type="match status" value="1"/>
</dbReference>
<keyword id="KW-0001">2Fe-2S</keyword>
<keyword id="KW-0963">Cytoplasm</keyword>
<keyword id="KW-0274">FAD</keyword>
<keyword id="KW-0285">Flavoprotein</keyword>
<keyword id="KW-0408">Iron</keyword>
<keyword id="KW-0411">Iron-sulfur</keyword>
<keyword id="KW-0479">Metal-binding</keyword>
<keyword id="KW-0500">Molybdenum</keyword>
<keyword id="KW-0560">Oxidoreductase</keyword>
<keyword id="KW-1185">Reference proteome</keyword>
<name>AOXD_MOUSE</name>
<reference key="1">
    <citation type="journal article" date="2001" name="J. Biol. Chem.">
        <title>Purification of the aldehyde oxidase homolog 1 (AOH1) protein and cloning of the AOH1 and aldehyde oxidase homolog 2 (AOH2) genes. Identification of a novel molybdo-flavoprotein gene cluster on mouse chromosome 1.</title>
        <authorList>
            <person name="Terao M."/>
            <person name="Kurosaki M."/>
            <person name="Marini M."/>
            <person name="Vanoni M.A."/>
            <person name="Saltini G."/>
            <person name="Bonetto V."/>
            <person name="Bastone A."/>
            <person name="Federico C."/>
            <person name="Saccone S."/>
            <person name="Fanelli R."/>
            <person name="Salmona M."/>
            <person name="Garattini E."/>
        </authorList>
    </citation>
    <scope>NUCLEOTIDE SEQUENCE [GENOMIC DNA]</scope>
    <source>
        <strain>129/Sv</strain>
    </source>
</reference>
<reference key="2">
    <citation type="journal article" date="2005" name="Science">
        <title>The transcriptional landscape of the mammalian genome.</title>
        <authorList>
            <person name="Carninci P."/>
            <person name="Kasukawa T."/>
            <person name="Katayama S."/>
            <person name="Gough J."/>
            <person name="Frith M.C."/>
            <person name="Maeda N."/>
            <person name="Oyama R."/>
            <person name="Ravasi T."/>
            <person name="Lenhard B."/>
            <person name="Wells C."/>
            <person name="Kodzius R."/>
            <person name="Shimokawa K."/>
            <person name="Bajic V.B."/>
            <person name="Brenner S.E."/>
            <person name="Batalov S."/>
            <person name="Forrest A.R."/>
            <person name="Zavolan M."/>
            <person name="Davis M.J."/>
            <person name="Wilming L.G."/>
            <person name="Aidinis V."/>
            <person name="Allen J.E."/>
            <person name="Ambesi-Impiombato A."/>
            <person name="Apweiler R."/>
            <person name="Aturaliya R.N."/>
            <person name="Bailey T.L."/>
            <person name="Bansal M."/>
            <person name="Baxter L."/>
            <person name="Beisel K.W."/>
            <person name="Bersano T."/>
            <person name="Bono H."/>
            <person name="Chalk A.M."/>
            <person name="Chiu K.P."/>
            <person name="Choudhary V."/>
            <person name="Christoffels A."/>
            <person name="Clutterbuck D.R."/>
            <person name="Crowe M.L."/>
            <person name="Dalla E."/>
            <person name="Dalrymple B.P."/>
            <person name="de Bono B."/>
            <person name="Della Gatta G."/>
            <person name="di Bernardo D."/>
            <person name="Down T."/>
            <person name="Engstrom P."/>
            <person name="Fagiolini M."/>
            <person name="Faulkner G."/>
            <person name="Fletcher C.F."/>
            <person name="Fukushima T."/>
            <person name="Furuno M."/>
            <person name="Futaki S."/>
            <person name="Gariboldi M."/>
            <person name="Georgii-Hemming P."/>
            <person name="Gingeras T.R."/>
            <person name="Gojobori T."/>
            <person name="Green R.E."/>
            <person name="Gustincich S."/>
            <person name="Harbers M."/>
            <person name="Hayashi Y."/>
            <person name="Hensch T.K."/>
            <person name="Hirokawa N."/>
            <person name="Hill D."/>
            <person name="Huminiecki L."/>
            <person name="Iacono M."/>
            <person name="Ikeo K."/>
            <person name="Iwama A."/>
            <person name="Ishikawa T."/>
            <person name="Jakt M."/>
            <person name="Kanapin A."/>
            <person name="Katoh M."/>
            <person name="Kawasawa Y."/>
            <person name="Kelso J."/>
            <person name="Kitamura H."/>
            <person name="Kitano H."/>
            <person name="Kollias G."/>
            <person name="Krishnan S.P."/>
            <person name="Kruger A."/>
            <person name="Kummerfeld S.K."/>
            <person name="Kurochkin I.V."/>
            <person name="Lareau L.F."/>
            <person name="Lazarevic D."/>
            <person name="Lipovich L."/>
            <person name="Liu J."/>
            <person name="Liuni S."/>
            <person name="McWilliam S."/>
            <person name="Madan Babu M."/>
            <person name="Madera M."/>
            <person name="Marchionni L."/>
            <person name="Matsuda H."/>
            <person name="Matsuzawa S."/>
            <person name="Miki H."/>
            <person name="Mignone F."/>
            <person name="Miyake S."/>
            <person name="Morris K."/>
            <person name="Mottagui-Tabar S."/>
            <person name="Mulder N."/>
            <person name="Nakano N."/>
            <person name="Nakauchi H."/>
            <person name="Ng P."/>
            <person name="Nilsson R."/>
            <person name="Nishiguchi S."/>
            <person name="Nishikawa S."/>
            <person name="Nori F."/>
            <person name="Ohara O."/>
            <person name="Okazaki Y."/>
            <person name="Orlando V."/>
            <person name="Pang K.C."/>
            <person name="Pavan W.J."/>
            <person name="Pavesi G."/>
            <person name="Pesole G."/>
            <person name="Petrovsky N."/>
            <person name="Piazza S."/>
            <person name="Reed J."/>
            <person name="Reid J.F."/>
            <person name="Ring B.Z."/>
            <person name="Ringwald M."/>
            <person name="Rost B."/>
            <person name="Ruan Y."/>
            <person name="Salzberg S.L."/>
            <person name="Sandelin A."/>
            <person name="Schneider C."/>
            <person name="Schoenbach C."/>
            <person name="Sekiguchi K."/>
            <person name="Semple C.A."/>
            <person name="Seno S."/>
            <person name="Sessa L."/>
            <person name="Sheng Y."/>
            <person name="Shibata Y."/>
            <person name="Shimada H."/>
            <person name="Shimada K."/>
            <person name="Silva D."/>
            <person name="Sinclair B."/>
            <person name="Sperling S."/>
            <person name="Stupka E."/>
            <person name="Sugiura K."/>
            <person name="Sultana R."/>
            <person name="Takenaka Y."/>
            <person name="Taki K."/>
            <person name="Tammoja K."/>
            <person name="Tan S.L."/>
            <person name="Tang S."/>
            <person name="Taylor M.S."/>
            <person name="Tegner J."/>
            <person name="Teichmann S.A."/>
            <person name="Ueda H.R."/>
            <person name="van Nimwegen E."/>
            <person name="Verardo R."/>
            <person name="Wei C.L."/>
            <person name="Yagi K."/>
            <person name="Yamanishi H."/>
            <person name="Zabarovsky E."/>
            <person name="Zhu S."/>
            <person name="Zimmer A."/>
            <person name="Hide W."/>
            <person name="Bult C."/>
            <person name="Grimmond S.M."/>
            <person name="Teasdale R.D."/>
            <person name="Liu E.T."/>
            <person name="Brusic V."/>
            <person name="Quackenbush J."/>
            <person name="Wahlestedt C."/>
            <person name="Mattick J.S."/>
            <person name="Hume D.A."/>
            <person name="Kai C."/>
            <person name="Sasaki D."/>
            <person name="Tomaru Y."/>
            <person name="Fukuda S."/>
            <person name="Kanamori-Katayama M."/>
            <person name="Suzuki M."/>
            <person name="Aoki J."/>
            <person name="Arakawa T."/>
            <person name="Iida J."/>
            <person name="Imamura K."/>
            <person name="Itoh M."/>
            <person name="Kato T."/>
            <person name="Kawaji H."/>
            <person name="Kawagashira N."/>
            <person name="Kawashima T."/>
            <person name="Kojima M."/>
            <person name="Kondo S."/>
            <person name="Konno H."/>
            <person name="Nakano K."/>
            <person name="Ninomiya N."/>
            <person name="Nishio T."/>
            <person name="Okada M."/>
            <person name="Plessy C."/>
            <person name="Shibata K."/>
            <person name="Shiraki T."/>
            <person name="Suzuki S."/>
            <person name="Tagami M."/>
            <person name="Waki K."/>
            <person name="Watahiki A."/>
            <person name="Okamura-Oho Y."/>
            <person name="Suzuki H."/>
            <person name="Kawai J."/>
            <person name="Hayashizaki Y."/>
        </authorList>
    </citation>
    <scope>NUCLEOTIDE SEQUENCE [LARGE SCALE MRNA]</scope>
</reference>
<reference key="3">
    <citation type="journal article" date="2009" name="PLoS Biol.">
        <title>Lineage-specific biology revealed by a finished genome assembly of the mouse.</title>
        <authorList>
            <person name="Church D.M."/>
            <person name="Goodstadt L."/>
            <person name="Hillier L.W."/>
            <person name="Zody M.C."/>
            <person name="Goldstein S."/>
            <person name="She X."/>
            <person name="Bult C.J."/>
            <person name="Agarwala R."/>
            <person name="Cherry J.L."/>
            <person name="DiCuccio M."/>
            <person name="Hlavina W."/>
            <person name="Kapustin Y."/>
            <person name="Meric P."/>
            <person name="Maglott D."/>
            <person name="Birtle Z."/>
            <person name="Marques A.C."/>
            <person name="Graves T."/>
            <person name="Zhou S."/>
            <person name="Teague B."/>
            <person name="Potamousis K."/>
            <person name="Churas C."/>
            <person name="Place M."/>
            <person name="Herschleb J."/>
            <person name="Runnheim R."/>
            <person name="Forrest D."/>
            <person name="Amos-Landgraf J."/>
            <person name="Schwartz D.C."/>
            <person name="Cheng Z."/>
            <person name="Lindblad-Toh K."/>
            <person name="Eichler E.E."/>
            <person name="Ponting C.P."/>
        </authorList>
    </citation>
    <scope>NUCLEOTIDE SEQUENCE [LARGE SCALE GENOMIC DNA]</scope>
    <source>
        <strain>C57BL/6J</strain>
    </source>
</reference>
<reference key="4">
    <citation type="journal article" date="2004" name="Genome Res.">
        <title>The status, quality, and expansion of the NIH full-length cDNA project: the Mammalian Gene Collection (MGC).</title>
        <authorList>
            <consortium name="The MGC Project Team"/>
        </authorList>
    </citation>
    <scope>NUCLEOTIDE SEQUENCE [LARGE SCALE MRNA]</scope>
</reference>
<reference key="5">
    <citation type="journal article" date="2009" name="Mol. Cell. Biol.">
        <title>Role of the molybdoflavoenzyme aldehyde oxidase homolog 2 in the biosynthesis of retinoic acid: generation and characterization of a knockout mouse.</title>
        <authorList>
            <person name="Terao M."/>
            <person name="Kurosaki M."/>
            <person name="Barzago M.M."/>
            <person name="Fratelli M."/>
            <person name="Bagnati R."/>
            <person name="Bastone A."/>
            <person name="Giudice C."/>
            <person name="Scanziani E."/>
            <person name="Mancuso A."/>
            <person name="Tiveron C."/>
            <person name="Garattini E."/>
        </authorList>
    </citation>
    <scope>FUNCTION AS RETINAL OXIDASE</scope>
    <scope>CATALYTIC ACTIVITY</scope>
    <scope>KINETIC PARAMETERS</scope>
    <scope>SUBSTRATE SPECIFICITY</scope>
    <scope>TISSUE SPECIFICITY</scope>
    <scope>INDUCTION</scope>
    <scope>DISRUPTION PHENOTYPE</scope>
    <scope>SUBCELLULAR LOCATION</scope>
    <scope>IDENTIFICATION BY MASS SPECTROMETRY</scope>
</reference>
<reference key="6">
    <citation type="journal article" date="2013" name="Cell. Mol. Life Sci.">
        <title>Structure and evolution of vertebrate aldehyde oxidases: from gene duplication to gene suppression.</title>
        <authorList>
            <person name="Kurosaki M."/>
            <person name="Bolis M."/>
            <person name="Fratelli M."/>
            <person name="Barzago M.M."/>
            <person name="Pattini L."/>
            <person name="Perretta G."/>
            <person name="Terao M."/>
            <person name="Garattini E."/>
        </authorList>
    </citation>
    <scope>TISSUE SPECIFICITY</scope>
    <scope>IDENTIFICATION OF PARALOGS</scope>
</reference>
<protein>
    <recommendedName>
        <fullName>Aldehyde oxidase 4</fullName>
        <ecNumber evidence="7">1.2.3.1</ecNumber>
    </recommendedName>
    <alternativeName>
        <fullName>Aldehyde oxidase homolog 2</fullName>
    </alternativeName>
    <alternativeName>
        <fullName>Azaheterocycle hydroxylase 4</fullName>
        <ecNumber>1.17.3.-</ecNumber>
    </alternativeName>
    <alternativeName>
        <fullName evidence="10">Retinal oxidase</fullName>
    </alternativeName>
</protein>
<comment type="function">
    <text evidence="7">Aldehyde oxidase able to catalyze the oxidation of retinaldehyde into retinoate. Is responsible for the major all-trans-retinaldehyde-metabolizing activity in the Harderian gland, and contributes a significant amount of the same activity in the skin. Is devoid of pyridoxal-oxidizing activity, in contrast to the other aldehyde oxidases. Acts as a negative modulator of the epidermal trophism. May be able to oxidize a wide variety of aldehydes into their corresponding carboxylates and to hydroxylate azaheterocycles.</text>
</comment>
<comment type="catalytic activity">
    <reaction evidence="7">
        <text>an aldehyde + O2 + H2O = a carboxylate + H2O2 + H(+)</text>
        <dbReference type="Rhea" id="RHEA:16829"/>
        <dbReference type="ChEBI" id="CHEBI:15377"/>
        <dbReference type="ChEBI" id="CHEBI:15378"/>
        <dbReference type="ChEBI" id="CHEBI:15379"/>
        <dbReference type="ChEBI" id="CHEBI:16240"/>
        <dbReference type="ChEBI" id="CHEBI:17478"/>
        <dbReference type="ChEBI" id="CHEBI:29067"/>
        <dbReference type="EC" id="1.2.3.1"/>
    </reaction>
</comment>
<comment type="catalytic activity">
    <reaction evidence="7">
        <text>retinal + O2 + H2O = retinoate + H2O2 + H(+)</text>
        <dbReference type="Rhea" id="RHEA:56736"/>
        <dbReference type="ChEBI" id="CHEBI:15035"/>
        <dbReference type="ChEBI" id="CHEBI:15036"/>
        <dbReference type="ChEBI" id="CHEBI:15377"/>
        <dbReference type="ChEBI" id="CHEBI:15378"/>
        <dbReference type="ChEBI" id="CHEBI:15379"/>
        <dbReference type="ChEBI" id="CHEBI:16240"/>
    </reaction>
</comment>
<comment type="catalytic activity">
    <reaction evidence="7">
        <text>all-trans-retinal + O2 + H2O = all-trans-retinoate + H2O2 + H(+)</text>
        <dbReference type="Rhea" id="RHEA:22520"/>
        <dbReference type="ChEBI" id="CHEBI:15377"/>
        <dbReference type="ChEBI" id="CHEBI:15378"/>
        <dbReference type="ChEBI" id="CHEBI:15379"/>
        <dbReference type="ChEBI" id="CHEBI:16240"/>
        <dbReference type="ChEBI" id="CHEBI:17898"/>
        <dbReference type="ChEBI" id="CHEBI:35291"/>
        <dbReference type="EC" id="1.2.3.1"/>
    </reaction>
</comment>
<comment type="cofactor">
    <cofactor evidence="2">
        <name>[2Fe-2S] cluster</name>
        <dbReference type="ChEBI" id="CHEBI:190135"/>
    </cofactor>
    <text evidence="2">Binds 2 [2Fe-2S] clusters per subunit.</text>
</comment>
<comment type="cofactor">
    <cofactor evidence="2">
        <name>FAD</name>
        <dbReference type="ChEBI" id="CHEBI:57692"/>
    </cofactor>
    <text evidence="2">Binds 1 FAD per subunit.</text>
</comment>
<comment type="cofactor">
    <cofactor evidence="2">
        <name>Mo-molybdopterin</name>
        <dbReference type="ChEBI" id="CHEBI:71302"/>
    </cofactor>
    <text evidence="2">Binds 1 Mo-molybdopterin (Mo-MPT) cofactor per subunit.</text>
</comment>
<comment type="biophysicochemical properties">
    <kinetics>
        <KM evidence="7">4.8 uM for all-trans-retinal (at 37 degrees Celsius and pH 7.4)</KM>
        <Vmax evidence="7">0.06 umol/min/mg enzyme with all-trans-retinal as substrate (at 37 degrees Celsius and pH 7.4)</Vmax>
    </kinetics>
</comment>
<comment type="subunit">
    <text evidence="2">Homodimer.</text>
</comment>
<comment type="subcellular location">
    <subcellularLocation>
        <location evidence="7">Cytoplasm</location>
    </subcellularLocation>
</comment>
<comment type="tissue specificity">
    <text evidence="7 8">Highly expressed in Harderian glands and sebaceous glands with detectable levels in the epidermis and other keratinized epithelia (at protein level). Detected in testis. The expression is 3 times greater in females than in males.</text>
</comment>
<comment type="induction">
    <text evidence="7">Repressed by testosterone in Harderian glands. In skin, induced by UVB light.</text>
</comment>
<comment type="disruption phenotype">
    <text evidence="7">Mice are viable, fertile and born at the expected Mendelian rate. However, they show a deficiency of retinoic acid synthesis in both the Harderian gland and skin. The Harderian gland's transcriptome of knockout mice demonstrates overall down-regulation of direct retinoid-dependent genes as well as perturbations in pathways controlling lipid homeostasis and cellular secretion, particularly in sexually immature animals. The skin is characterized by thickening of the epidermis in basal conditions and after UVB light exposure.</text>
</comment>
<comment type="miscellaneous">
    <text evidence="11">AOX genes evolved from a xanthine oxidoreductase ancestral precursor via a series of gene duplication and suppression/deletion events. Different animal species contain a different complement of AOX genes encoding an equivalent number of AOX isoenzymes. In mammals, the two extremes are represented by certain rodents such as mice and rats, which are endowed with 4 AOX genes, and by humans, whose genome is characterized by a single active gene (PubMed:23263164).</text>
</comment>
<comment type="similarity">
    <text evidence="9">Belongs to the xanthine dehydrogenase family.</text>
</comment>
<gene>
    <name type="primary">Aox4</name>
    <name type="synonym">Aoh2</name>
</gene>
<organism>
    <name type="scientific">Mus musculus</name>
    <name type="common">Mouse</name>
    <dbReference type="NCBI Taxonomy" id="10090"/>
    <lineage>
        <taxon>Eukaryota</taxon>
        <taxon>Metazoa</taxon>
        <taxon>Chordata</taxon>
        <taxon>Craniata</taxon>
        <taxon>Vertebrata</taxon>
        <taxon>Euteleostomi</taxon>
        <taxon>Mammalia</taxon>
        <taxon>Eutheria</taxon>
        <taxon>Euarchontoglires</taxon>
        <taxon>Glires</taxon>
        <taxon>Rodentia</taxon>
        <taxon>Myomorpha</taxon>
        <taxon>Muroidea</taxon>
        <taxon>Muridae</taxon>
        <taxon>Murinae</taxon>
        <taxon>Mus</taxon>
        <taxon>Mus</taxon>
    </lineage>
</organism>